<organism>
    <name type="scientific">Burkholderia ambifaria (strain ATCC BAA-244 / DSM 16087 / CCUG 44356 / LMG 19182 / AMMD)</name>
    <name type="common">Burkholderia cepacia (strain AMMD)</name>
    <dbReference type="NCBI Taxonomy" id="339670"/>
    <lineage>
        <taxon>Bacteria</taxon>
        <taxon>Pseudomonadati</taxon>
        <taxon>Pseudomonadota</taxon>
        <taxon>Betaproteobacteria</taxon>
        <taxon>Burkholderiales</taxon>
        <taxon>Burkholderiaceae</taxon>
        <taxon>Burkholderia</taxon>
        <taxon>Burkholderia cepacia complex</taxon>
    </lineage>
</organism>
<feature type="chain" id="PRO_0000277679" description="Methionine import ATP-binding protein MetN 2">
    <location>
        <begin position="1"/>
        <end position="391"/>
    </location>
</feature>
<feature type="domain" description="ABC transporter" evidence="1">
    <location>
        <begin position="44"/>
        <end position="280"/>
    </location>
</feature>
<feature type="binding site" evidence="1">
    <location>
        <begin position="77"/>
        <end position="84"/>
    </location>
    <ligand>
        <name>ATP</name>
        <dbReference type="ChEBI" id="CHEBI:30616"/>
    </ligand>
</feature>
<protein>
    <recommendedName>
        <fullName evidence="1">Methionine import ATP-binding protein MetN 2</fullName>
        <ecNumber evidence="1">7.4.2.11</ecNumber>
    </recommendedName>
</protein>
<accession>Q0B6I6</accession>
<name>METN2_BURCM</name>
<gene>
    <name evidence="1" type="primary">metN2</name>
    <name type="ordered locus">Bamb_4687</name>
</gene>
<reference key="1">
    <citation type="submission" date="2006-08" db="EMBL/GenBank/DDBJ databases">
        <title>Complete sequence of chromosome 2 of Burkholderia cepacia AMMD.</title>
        <authorList>
            <person name="Copeland A."/>
            <person name="Lucas S."/>
            <person name="Lapidus A."/>
            <person name="Barry K."/>
            <person name="Detter J.C."/>
            <person name="Glavina del Rio T."/>
            <person name="Hammon N."/>
            <person name="Israni S."/>
            <person name="Pitluck S."/>
            <person name="Bruce D."/>
            <person name="Chain P."/>
            <person name="Malfatti S."/>
            <person name="Shin M."/>
            <person name="Vergez L."/>
            <person name="Schmutz J."/>
            <person name="Larimer F."/>
            <person name="Land M."/>
            <person name="Hauser L."/>
            <person name="Kyrpides N."/>
            <person name="Kim E."/>
            <person name="Parke J."/>
            <person name="Coenye T."/>
            <person name="Konstantinidis K."/>
            <person name="Ramette A."/>
            <person name="Tiedje J."/>
            <person name="Richardson P."/>
        </authorList>
    </citation>
    <scope>NUCLEOTIDE SEQUENCE [LARGE SCALE GENOMIC DNA]</scope>
    <source>
        <strain>ATCC BAA-244 / DSM 16087 / CCUG 44356 / LMG 19182 / AMMD</strain>
    </source>
</reference>
<comment type="function">
    <text evidence="1">Part of the ABC transporter complex MetNIQ involved in methionine import. Responsible for energy coupling to the transport system.</text>
</comment>
<comment type="catalytic activity">
    <reaction evidence="1">
        <text>L-methionine(out) + ATP + H2O = L-methionine(in) + ADP + phosphate + H(+)</text>
        <dbReference type="Rhea" id="RHEA:29779"/>
        <dbReference type="ChEBI" id="CHEBI:15377"/>
        <dbReference type="ChEBI" id="CHEBI:15378"/>
        <dbReference type="ChEBI" id="CHEBI:30616"/>
        <dbReference type="ChEBI" id="CHEBI:43474"/>
        <dbReference type="ChEBI" id="CHEBI:57844"/>
        <dbReference type="ChEBI" id="CHEBI:456216"/>
        <dbReference type="EC" id="7.4.2.11"/>
    </reaction>
</comment>
<comment type="catalytic activity">
    <reaction evidence="1">
        <text>D-methionine(out) + ATP + H2O = D-methionine(in) + ADP + phosphate + H(+)</text>
        <dbReference type="Rhea" id="RHEA:29767"/>
        <dbReference type="ChEBI" id="CHEBI:15377"/>
        <dbReference type="ChEBI" id="CHEBI:15378"/>
        <dbReference type="ChEBI" id="CHEBI:30616"/>
        <dbReference type="ChEBI" id="CHEBI:43474"/>
        <dbReference type="ChEBI" id="CHEBI:57932"/>
        <dbReference type="ChEBI" id="CHEBI:456216"/>
        <dbReference type="EC" id="7.4.2.11"/>
    </reaction>
</comment>
<comment type="subunit">
    <text evidence="1">The complex is composed of two ATP-binding proteins (MetN), two transmembrane proteins (MetI) and a solute-binding protein (MetQ).</text>
</comment>
<comment type="subcellular location">
    <subcellularLocation>
        <location evidence="1">Cell inner membrane</location>
        <topology evidence="1">Peripheral membrane protein</topology>
    </subcellularLocation>
</comment>
<comment type="similarity">
    <text evidence="1">Belongs to the ABC transporter superfamily. Methionine importer (TC 3.A.1.24) family.</text>
</comment>
<sequence length="391" mass="41073">MTQLFDTLGFIETSAVRAGAAARDAHGAHQEAATRADVAAVSLVHVGKVFATPRGHAAALRDVTFDVRRGEVFGIIGRSGAGKSTLLRLVNGLERPSSGSVRVQGVDVGALDEDGLVALRRRTGMVFQHFNLLSAKTVFENVALPLKIAGVPKAERTRKVDALLDLVGLAAKRDAYPASLSGGQKQRVGIARALVHDPEVLLCDEATSALDPETTQSILALLADINRRLGLTIVLITHEMEVIRAVCDTVAVIEQGELVETGPVWRVFGDPRHGATRALLSTLVHDLPAELAARVQPLPEQAALPDGAQVVLDVRYTGESGGEPDVGALAAALGGSVRFLHGGIERIQGHAQGRLVIAASPGQSLAHGGAVAALLERARRHANHAEVLGYV</sequence>
<dbReference type="EC" id="7.4.2.11" evidence="1"/>
<dbReference type="EMBL" id="CP000441">
    <property type="protein sequence ID" value="ABI90237.1"/>
    <property type="molecule type" value="Genomic_DNA"/>
</dbReference>
<dbReference type="RefSeq" id="WP_011659643.1">
    <property type="nucleotide sequence ID" value="NC_008391.1"/>
</dbReference>
<dbReference type="SMR" id="Q0B6I6"/>
<dbReference type="GeneID" id="93087643"/>
<dbReference type="KEGG" id="bam:Bamb_4687"/>
<dbReference type="PATRIC" id="fig|339670.21.peg.5039"/>
<dbReference type="eggNOG" id="COG1135">
    <property type="taxonomic scope" value="Bacteria"/>
</dbReference>
<dbReference type="Proteomes" id="UP000000662">
    <property type="component" value="Chromosome 2"/>
</dbReference>
<dbReference type="GO" id="GO:0005886">
    <property type="term" value="C:plasma membrane"/>
    <property type="evidence" value="ECO:0007669"/>
    <property type="project" value="UniProtKB-SubCell"/>
</dbReference>
<dbReference type="GO" id="GO:0033232">
    <property type="term" value="F:ABC-type D-methionine transporter activity"/>
    <property type="evidence" value="ECO:0007669"/>
    <property type="project" value="UniProtKB-EC"/>
</dbReference>
<dbReference type="GO" id="GO:0005524">
    <property type="term" value="F:ATP binding"/>
    <property type="evidence" value="ECO:0007669"/>
    <property type="project" value="UniProtKB-KW"/>
</dbReference>
<dbReference type="GO" id="GO:0016887">
    <property type="term" value="F:ATP hydrolysis activity"/>
    <property type="evidence" value="ECO:0007669"/>
    <property type="project" value="InterPro"/>
</dbReference>
<dbReference type="CDD" id="cd03258">
    <property type="entry name" value="ABC_MetN_methionine_transporter"/>
    <property type="match status" value="1"/>
</dbReference>
<dbReference type="FunFam" id="3.40.50.300:FF:000056">
    <property type="entry name" value="Cell division ATP-binding protein FtsE"/>
    <property type="match status" value="1"/>
</dbReference>
<dbReference type="Gene3D" id="3.30.70.260">
    <property type="match status" value="1"/>
</dbReference>
<dbReference type="Gene3D" id="3.40.50.300">
    <property type="entry name" value="P-loop containing nucleotide triphosphate hydrolases"/>
    <property type="match status" value="1"/>
</dbReference>
<dbReference type="InterPro" id="IPR003593">
    <property type="entry name" value="AAA+_ATPase"/>
</dbReference>
<dbReference type="InterPro" id="IPR003439">
    <property type="entry name" value="ABC_transporter-like_ATP-bd"/>
</dbReference>
<dbReference type="InterPro" id="IPR017871">
    <property type="entry name" value="ABC_transporter-like_CS"/>
</dbReference>
<dbReference type="InterPro" id="IPR045865">
    <property type="entry name" value="ACT-like_dom_sf"/>
</dbReference>
<dbReference type="InterPro" id="IPR041701">
    <property type="entry name" value="MetN_ABC"/>
</dbReference>
<dbReference type="InterPro" id="IPR050086">
    <property type="entry name" value="MetN_ABC_transporter-like"/>
</dbReference>
<dbReference type="InterPro" id="IPR018449">
    <property type="entry name" value="NIL_domain"/>
</dbReference>
<dbReference type="InterPro" id="IPR027417">
    <property type="entry name" value="P-loop_NTPase"/>
</dbReference>
<dbReference type="PANTHER" id="PTHR43166">
    <property type="entry name" value="AMINO ACID IMPORT ATP-BINDING PROTEIN"/>
    <property type="match status" value="1"/>
</dbReference>
<dbReference type="PANTHER" id="PTHR43166:SF30">
    <property type="entry name" value="METHIONINE IMPORT ATP-BINDING PROTEIN METN"/>
    <property type="match status" value="1"/>
</dbReference>
<dbReference type="Pfam" id="PF00005">
    <property type="entry name" value="ABC_tran"/>
    <property type="match status" value="1"/>
</dbReference>
<dbReference type="Pfam" id="PF09383">
    <property type="entry name" value="NIL"/>
    <property type="match status" value="1"/>
</dbReference>
<dbReference type="SMART" id="SM00382">
    <property type="entry name" value="AAA"/>
    <property type="match status" value="1"/>
</dbReference>
<dbReference type="SMART" id="SM00930">
    <property type="entry name" value="NIL"/>
    <property type="match status" value="1"/>
</dbReference>
<dbReference type="SUPFAM" id="SSF55021">
    <property type="entry name" value="ACT-like"/>
    <property type="match status" value="1"/>
</dbReference>
<dbReference type="SUPFAM" id="SSF52540">
    <property type="entry name" value="P-loop containing nucleoside triphosphate hydrolases"/>
    <property type="match status" value="1"/>
</dbReference>
<dbReference type="PROSITE" id="PS00211">
    <property type="entry name" value="ABC_TRANSPORTER_1"/>
    <property type="match status" value="1"/>
</dbReference>
<dbReference type="PROSITE" id="PS50893">
    <property type="entry name" value="ABC_TRANSPORTER_2"/>
    <property type="match status" value="1"/>
</dbReference>
<dbReference type="PROSITE" id="PS51264">
    <property type="entry name" value="METN"/>
    <property type="match status" value="1"/>
</dbReference>
<evidence type="ECO:0000255" key="1">
    <source>
        <dbReference type="HAMAP-Rule" id="MF_01719"/>
    </source>
</evidence>
<keyword id="KW-0029">Amino-acid transport</keyword>
<keyword id="KW-0067">ATP-binding</keyword>
<keyword id="KW-0997">Cell inner membrane</keyword>
<keyword id="KW-1003">Cell membrane</keyword>
<keyword id="KW-0472">Membrane</keyword>
<keyword id="KW-0547">Nucleotide-binding</keyword>
<keyword id="KW-1278">Translocase</keyword>
<keyword id="KW-0813">Transport</keyword>
<proteinExistence type="inferred from homology"/>